<gene>
    <name evidence="1" type="primary">rsmG</name>
    <name type="ordered locus">NT01EI_3904</name>
</gene>
<comment type="function">
    <text evidence="1">Specifically methylates the N7 position of guanine in position 527 of 16S rRNA.</text>
</comment>
<comment type="catalytic activity">
    <reaction evidence="1">
        <text>guanosine(527) in 16S rRNA + S-adenosyl-L-methionine = N(7)-methylguanosine(527) in 16S rRNA + S-adenosyl-L-homocysteine</text>
        <dbReference type="Rhea" id="RHEA:42732"/>
        <dbReference type="Rhea" id="RHEA-COMP:10209"/>
        <dbReference type="Rhea" id="RHEA-COMP:10210"/>
        <dbReference type="ChEBI" id="CHEBI:57856"/>
        <dbReference type="ChEBI" id="CHEBI:59789"/>
        <dbReference type="ChEBI" id="CHEBI:74269"/>
        <dbReference type="ChEBI" id="CHEBI:74480"/>
        <dbReference type="EC" id="2.1.1.170"/>
    </reaction>
</comment>
<comment type="subcellular location">
    <subcellularLocation>
        <location evidence="1">Cytoplasm</location>
    </subcellularLocation>
</comment>
<comment type="similarity">
    <text evidence="1">Belongs to the methyltransferase superfamily. RNA methyltransferase RsmG family.</text>
</comment>
<protein>
    <recommendedName>
        <fullName evidence="1">Ribosomal RNA small subunit methyltransferase G</fullName>
        <ecNumber evidence="1">2.1.1.170</ecNumber>
    </recommendedName>
    <alternativeName>
        <fullName evidence="1">16S rRNA 7-methylguanosine methyltransferase</fullName>
        <shortName evidence="1">16S rRNA m7G methyltransferase</shortName>
    </alternativeName>
</protein>
<reference key="1">
    <citation type="submission" date="2009-03" db="EMBL/GenBank/DDBJ databases">
        <title>Complete genome sequence of Edwardsiella ictaluri 93-146.</title>
        <authorList>
            <person name="Williams M.L."/>
            <person name="Gillaspy A.F."/>
            <person name="Dyer D.W."/>
            <person name="Thune R.L."/>
            <person name="Waldbieser G.C."/>
            <person name="Schuster S.C."/>
            <person name="Gipson J."/>
            <person name="Zaitshik J."/>
            <person name="Landry C."/>
            <person name="Lawrence M.L."/>
        </authorList>
    </citation>
    <scope>NUCLEOTIDE SEQUENCE [LARGE SCALE GENOMIC DNA]</scope>
    <source>
        <strain>93-146</strain>
    </source>
</reference>
<evidence type="ECO:0000255" key="1">
    <source>
        <dbReference type="HAMAP-Rule" id="MF_00074"/>
    </source>
</evidence>
<accession>C5BF32</accession>
<feature type="chain" id="PRO_1000202499" description="Ribosomal RNA small subunit methyltransferase G">
    <location>
        <begin position="1"/>
        <end position="206"/>
    </location>
</feature>
<feature type="binding site" evidence="1">
    <location>
        <position position="73"/>
    </location>
    <ligand>
        <name>S-adenosyl-L-methionine</name>
        <dbReference type="ChEBI" id="CHEBI:59789"/>
    </ligand>
</feature>
<feature type="binding site" evidence="1">
    <location>
        <position position="78"/>
    </location>
    <ligand>
        <name>S-adenosyl-L-methionine</name>
        <dbReference type="ChEBI" id="CHEBI:59789"/>
    </ligand>
</feature>
<feature type="binding site" evidence="1">
    <location>
        <begin position="124"/>
        <end position="125"/>
    </location>
    <ligand>
        <name>S-adenosyl-L-methionine</name>
        <dbReference type="ChEBI" id="CHEBI:59789"/>
    </ligand>
</feature>
<feature type="binding site" evidence="1">
    <location>
        <position position="139"/>
    </location>
    <ligand>
        <name>S-adenosyl-L-methionine</name>
        <dbReference type="ChEBI" id="CHEBI:59789"/>
    </ligand>
</feature>
<proteinExistence type="inferred from homology"/>
<name>RSMG_EDWI9</name>
<sequence>MYKQLDTLLAQAGISLTDQQKQRLLGYVSLLDKWNKAYNLTSVREPRDMLVRHIMDSIVVSPYLQGLRFIDVGTGPGLPGIPLAIVRPDANFTLLDSLGKRVRFLRQVQHELRLDNIEPVQSRVEAFVAEPPFDGVISRAFASLQDMVSWCHHLPAAHHGRFYALKGGVPQDELQSLPAGVSVDQLIRLQVPMLEGERHLVVLKSD</sequence>
<organism>
    <name type="scientific">Edwardsiella ictaluri (strain 93-146)</name>
    <dbReference type="NCBI Taxonomy" id="634503"/>
    <lineage>
        <taxon>Bacteria</taxon>
        <taxon>Pseudomonadati</taxon>
        <taxon>Pseudomonadota</taxon>
        <taxon>Gammaproteobacteria</taxon>
        <taxon>Enterobacterales</taxon>
        <taxon>Hafniaceae</taxon>
        <taxon>Edwardsiella</taxon>
    </lineage>
</organism>
<dbReference type="EC" id="2.1.1.170" evidence="1"/>
<dbReference type="EMBL" id="CP001600">
    <property type="protein sequence ID" value="ACR71015.1"/>
    <property type="molecule type" value="Genomic_DNA"/>
</dbReference>
<dbReference type="RefSeq" id="WP_015873045.1">
    <property type="nucleotide sequence ID" value="NZ_CP169062.1"/>
</dbReference>
<dbReference type="SMR" id="C5BF32"/>
<dbReference type="STRING" id="67780.B6E78_11045"/>
<dbReference type="GeneID" id="69540720"/>
<dbReference type="KEGG" id="eic:NT01EI_3904"/>
<dbReference type="PATRIC" id="fig|634503.3.peg.3475"/>
<dbReference type="HOGENOM" id="CLU_065341_2_2_6"/>
<dbReference type="OrthoDB" id="9808773at2"/>
<dbReference type="Proteomes" id="UP000001485">
    <property type="component" value="Chromosome"/>
</dbReference>
<dbReference type="GO" id="GO:0005829">
    <property type="term" value="C:cytosol"/>
    <property type="evidence" value="ECO:0007669"/>
    <property type="project" value="TreeGrafter"/>
</dbReference>
<dbReference type="GO" id="GO:0070043">
    <property type="term" value="F:rRNA (guanine-N7-)-methyltransferase activity"/>
    <property type="evidence" value="ECO:0007669"/>
    <property type="project" value="UniProtKB-UniRule"/>
</dbReference>
<dbReference type="CDD" id="cd02440">
    <property type="entry name" value="AdoMet_MTases"/>
    <property type="match status" value="1"/>
</dbReference>
<dbReference type="FunFam" id="3.40.50.150:FF:000032">
    <property type="entry name" value="Ribosomal RNA small subunit methyltransferase G"/>
    <property type="match status" value="1"/>
</dbReference>
<dbReference type="Gene3D" id="3.40.50.150">
    <property type="entry name" value="Vaccinia Virus protein VP39"/>
    <property type="match status" value="1"/>
</dbReference>
<dbReference type="HAMAP" id="MF_00074">
    <property type="entry name" value="16SrRNA_methyltr_G"/>
    <property type="match status" value="1"/>
</dbReference>
<dbReference type="InterPro" id="IPR003682">
    <property type="entry name" value="rRNA_ssu_MeTfrase_G"/>
</dbReference>
<dbReference type="InterPro" id="IPR029063">
    <property type="entry name" value="SAM-dependent_MTases_sf"/>
</dbReference>
<dbReference type="NCBIfam" id="TIGR00138">
    <property type="entry name" value="rsmG_gidB"/>
    <property type="match status" value="1"/>
</dbReference>
<dbReference type="PANTHER" id="PTHR31760">
    <property type="entry name" value="S-ADENOSYL-L-METHIONINE-DEPENDENT METHYLTRANSFERASES SUPERFAMILY PROTEIN"/>
    <property type="match status" value="1"/>
</dbReference>
<dbReference type="PANTHER" id="PTHR31760:SF0">
    <property type="entry name" value="S-ADENOSYL-L-METHIONINE-DEPENDENT METHYLTRANSFERASES SUPERFAMILY PROTEIN"/>
    <property type="match status" value="1"/>
</dbReference>
<dbReference type="Pfam" id="PF02527">
    <property type="entry name" value="GidB"/>
    <property type="match status" value="1"/>
</dbReference>
<dbReference type="PIRSF" id="PIRSF003078">
    <property type="entry name" value="GidB"/>
    <property type="match status" value="1"/>
</dbReference>
<dbReference type="SUPFAM" id="SSF53335">
    <property type="entry name" value="S-adenosyl-L-methionine-dependent methyltransferases"/>
    <property type="match status" value="1"/>
</dbReference>
<keyword id="KW-0963">Cytoplasm</keyword>
<keyword id="KW-0489">Methyltransferase</keyword>
<keyword id="KW-0698">rRNA processing</keyword>
<keyword id="KW-0949">S-adenosyl-L-methionine</keyword>
<keyword id="KW-0808">Transferase</keyword>